<organism>
    <name type="scientific">Yersinia pestis bv. Antiqua (strain Nepal516)</name>
    <dbReference type="NCBI Taxonomy" id="377628"/>
    <lineage>
        <taxon>Bacteria</taxon>
        <taxon>Pseudomonadati</taxon>
        <taxon>Pseudomonadota</taxon>
        <taxon>Gammaproteobacteria</taxon>
        <taxon>Enterobacterales</taxon>
        <taxon>Yersiniaceae</taxon>
        <taxon>Yersinia</taxon>
    </lineage>
</organism>
<sequence>MSKEKFERTKPHVNVGTIGHVDHGKTTLTAAITTVLAKTYGGSARAFDQIDNAPEEKARGITINTSHVEYDTPARHYAHVDCPGHADYVKNMITGAAQMDGAILVVAATDGPMPQTREHILLGRQVGVPYIIVFMNKCDMVDDEELLELVEMEVRELLSAYDFPGDDLPVVRGSALKALEGEAEWEAKIIELAGYLDSYIPEPERAIDKPFLLPIEDVFSISGRGTVVTGRVERGIVKVGEEVEIVGIKDTVKSTCTGVEMFRKLLDEGRAGENVGVLLRGIKREDIERGQVLAKPGSIKPHTTFESEVYILSKDEGGRHTPFFKGYRPQFYFRTTDVTGTIELPEGVEMVMPGDNINMIVTLIHPIAMDDGLRFAIREGGRTVGAGVVAKVIA</sequence>
<name>EFTU2_YERPN</name>
<comment type="function">
    <text evidence="2">GTP hydrolase that promotes the GTP-dependent binding of aminoacyl-tRNA to the A-site of ribosomes during protein biosynthesis.</text>
</comment>
<comment type="catalytic activity">
    <reaction evidence="2">
        <text>GTP + H2O = GDP + phosphate + H(+)</text>
        <dbReference type="Rhea" id="RHEA:19669"/>
        <dbReference type="ChEBI" id="CHEBI:15377"/>
        <dbReference type="ChEBI" id="CHEBI:15378"/>
        <dbReference type="ChEBI" id="CHEBI:37565"/>
        <dbReference type="ChEBI" id="CHEBI:43474"/>
        <dbReference type="ChEBI" id="CHEBI:58189"/>
        <dbReference type="EC" id="3.6.5.3"/>
    </reaction>
    <physiologicalReaction direction="left-to-right" evidence="2">
        <dbReference type="Rhea" id="RHEA:19670"/>
    </physiologicalReaction>
</comment>
<comment type="subunit">
    <text evidence="2">Monomer.</text>
</comment>
<comment type="subcellular location">
    <subcellularLocation>
        <location evidence="2">Cytoplasm</location>
    </subcellularLocation>
</comment>
<comment type="similarity">
    <text evidence="2">Belongs to the TRAFAC class translation factor GTPase superfamily. Classic translation factor GTPase family. EF-Tu/EF-1A subfamily.</text>
</comment>
<accession>Q1CCT9</accession>
<accession>D1Q2M6</accession>
<proteinExistence type="inferred from homology"/>
<feature type="chain" id="PRO_1000015785" description="Elongation factor Tu 2">
    <location>
        <begin position="1"/>
        <end position="394"/>
    </location>
</feature>
<feature type="domain" description="tr-type G">
    <location>
        <begin position="10"/>
        <end position="204"/>
    </location>
</feature>
<feature type="region of interest" description="G1" evidence="1">
    <location>
        <begin position="19"/>
        <end position="26"/>
    </location>
</feature>
<feature type="region of interest" description="G2" evidence="1">
    <location>
        <begin position="60"/>
        <end position="64"/>
    </location>
</feature>
<feature type="region of interest" description="G3" evidence="1">
    <location>
        <begin position="81"/>
        <end position="84"/>
    </location>
</feature>
<feature type="region of interest" description="G4" evidence="1">
    <location>
        <begin position="136"/>
        <end position="139"/>
    </location>
</feature>
<feature type="region of interest" description="G5" evidence="1">
    <location>
        <begin position="174"/>
        <end position="176"/>
    </location>
</feature>
<feature type="binding site" evidence="2">
    <location>
        <begin position="19"/>
        <end position="26"/>
    </location>
    <ligand>
        <name>GTP</name>
        <dbReference type="ChEBI" id="CHEBI:37565"/>
    </ligand>
</feature>
<feature type="binding site" evidence="2">
    <location>
        <position position="26"/>
    </location>
    <ligand>
        <name>Mg(2+)</name>
        <dbReference type="ChEBI" id="CHEBI:18420"/>
    </ligand>
</feature>
<feature type="binding site" evidence="2">
    <location>
        <begin position="81"/>
        <end position="85"/>
    </location>
    <ligand>
        <name>GTP</name>
        <dbReference type="ChEBI" id="CHEBI:37565"/>
    </ligand>
</feature>
<feature type="binding site" evidence="2">
    <location>
        <begin position="136"/>
        <end position="139"/>
    </location>
    <ligand>
        <name>GTP</name>
        <dbReference type="ChEBI" id="CHEBI:37565"/>
    </ligand>
</feature>
<reference key="1">
    <citation type="journal article" date="2006" name="J. Bacteriol.">
        <title>Complete genome sequence of Yersinia pestis strains Antiqua and Nepal516: evidence of gene reduction in an emerging pathogen.</title>
        <authorList>
            <person name="Chain P.S.G."/>
            <person name="Hu P."/>
            <person name="Malfatti S.A."/>
            <person name="Radnedge L."/>
            <person name="Larimer F."/>
            <person name="Vergez L.M."/>
            <person name="Worsham P."/>
            <person name="Chu M.C."/>
            <person name="Andersen G.L."/>
        </authorList>
    </citation>
    <scope>NUCLEOTIDE SEQUENCE [LARGE SCALE GENOMIC DNA]</scope>
    <source>
        <strain>Nepal516</strain>
    </source>
</reference>
<reference key="2">
    <citation type="submission" date="2009-04" db="EMBL/GenBank/DDBJ databases">
        <title>Yersinia pestis Nepal516A whole genome shotgun sequencing project.</title>
        <authorList>
            <person name="Plunkett G. III"/>
            <person name="Anderson B.D."/>
            <person name="Baumler D.J."/>
            <person name="Burland V."/>
            <person name="Cabot E.L."/>
            <person name="Glasner J.D."/>
            <person name="Mau B."/>
            <person name="Neeno-Eckwall E."/>
            <person name="Perna N.T."/>
            <person name="Munk A.C."/>
            <person name="Tapia R."/>
            <person name="Green L.D."/>
            <person name="Rogers Y.C."/>
            <person name="Detter J.C."/>
            <person name="Bruce D.C."/>
            <person name="Brettin T.S."/>
        </authorList>
    </citation>
    <scope>NUCLEOTIDE SEQUENCE [LARGE SCALE GENOMIC DNA]</scope>
    <source>
        <strain>Nepal516</strain>
    </source>
</reference>
<protein>
    <recommendedName>
        <fullName evidence="2">Elongation factor Tu 2</fullName>
        <shortName evidence="2">EF-Tu 2</shortName>
        <ecNumber evidence="2">3.6.5.3</ecNumber>
    </recommendedName>
</protein>
<evidence type="ECO:0000250" key="1"/>
<evidence type="ECO:0000255" key="2">
    <source>
        <dbReference type="HAMAP-Rule" id="MF_00118"/>
    </source>
</evidence>
<dbReference type="EC" id="3.6.5.3" evidence="2"/>
<dbReference type="EMBL" id="CP000305">
    <property type="protein sequence ID" value="ABG20191.1"/>
    <property type="molecule type" value="Genomic_DNA"/>
</dbReference>
<dbReference type="EMBL" id="ACNQ01000019">
    <property type="protein sequence ID" value="EEO74779.1"/>
    <property type="molecule type" value="Genomic_DNA"/>
</dbReference>
<dbReference type="SMR" id="Q1CCT9"/>
<dbReference type="KEGG" id="ypn:YPN_3864"/>
<dbReference type="HOGENOM" id="CLU_007265_0_2_6"/>
<dbReference type="Proteomes" id="UP000008936">
    <property type="component" value="Chromosome"/>
</dbReference>
<dbReference type="GO" id="GO:0005829">
    <property type="term" value="C:cytosol"/>
    <property type="evidence" value="ECO:0007669"/>
    <property type="project" value="TreeGrafter"/>
</dbReference>
<dbReference type="GO" id="GO:0005525">
    <property type="term" value="F:GTP binding"/>
    <property type="evidence" value="ECO:0007669"/>
    <property type="project" value="UniProtKB-UniRule"/>
</dbReference>
<dbReference type="GO" id="GO:0003924">
    <property type="term" value="F:GTPase activity"/>
    <property type="evidence" value="ECO:0007669"/>
    <property type="project" value="InterPro"/>
</dbReference>
<dbReference type="GO" id="GO:0097216">
    <property type="term" value="F:guanosine tetraphosphate binding"/>
    <property type="evidence" value="ECO:0007669"/>
    <property type="project" value="UniProtKB-ARBA"/>
</dbReference>
<dbReference type="GO" id="GO:0003746">
    <property type="term" value="F:translation elongation factor activity"/>
    <property type="evidence" value="ECO:0007669"/>
    <property type="project" value="UniProtKB-UniRule"/>
</dbReference>
<dbReference type="CDD" id="cd01884">
    <property type="entry name" value="EF_Tu"/>
    <property type="match status" value="1"/>
</dbReference>
<dbReference type="CDD" id="cd03697">
    <property type="entry name" value="EFTU_II"/>
    <property type="match status" value="1"/>
</dbReference>
<dbReference type="CDD" id="cd03707">
    <property type="entry name" value="EFTU_III"/>
    <property type="match status" value="1"/>
</dbReference>
<dbReference type="FunFam" id="2.40.30.10:FF:000001">
    <property type="entry name" value="Elongation factor Tu"/>
    <property type="match status" value="1"/>
</dbReference>
<dbReference type="FunFam" id="3.40.50.300:FF:000003">
    <property type="entry name" value="Elongation factor Tu"/>
    <property type="match status" value="1"/>
</dbReference>
<dbReference type="Gene3D" id="3.40.50.300">
    <property type="entry name" value="P-loop containing nucleotide triphosphate hydrolases"/>
    <property type="match status" value="1"/>
</dbReference>
<dbReference type="Gene3D" id="2.40.30.10">
    <property type="entry name" value="Translation factors"/>
    <property type="match status" value="2"/>
</dbReference>
<dbReference type="HAMAP" id="MF_00118_B">
    <property type="entry name" value="EF_Tu_B"/>
    <property type="match status" value="1"/>
</dbReference>
<dbReference type="InterPro" id="IPR041709">
    <property type="entry name" value="EF-Tu_GTP-bd"/>
</dbReference>
<dbReference type="InterPro" id="IPR050055">
    <property type="entry name" value="EF-Tu_GTPase"/>
</dbReference>
<dbReference type="InterPro" id="IPR004161">
    <property type="entry name" value="EFTu-like_2"/>
</dbReference>
<dbReference type="InterPro" id="IPR033720">
    <property type="entry name" value="EFTU_2"/>
</dbReference>
<dbReference type="InterPro" id="IPR031157">
    <property type="entry name" value="G_TR_CS"/>
</dbReference>
<dbReference type="InterPro" id="IPR027417">
    <property type="entry name" value="P-loop_NTPase"/>
</dbReference>
<dbReference type="InterPro" id="IPR005225">
    <property type="entry name" value="Small_GTP-bd"/>
</dbReference>
<dbReference type="InterPro" id="IPR000795">
    <property type="entry name" value="T_Tr_GTP-bd_dom"/>
</dbReference>
<dbReference type="InterPro" id="IPR009000">
    <property type="entry name" value="Transl_B-barrel_sf"/>
</dbReference>
<dbReference type="InterPro" id="IPR009001">
    <property type="entry name" value="Transl_elong_EF1A/Init_IF2_C"/>
</dbReference>
<dbReference type="InterPro" id="IPR004541">
    <property type="entry name" value="Transl_elong_EFTu/EF1A_bac/org"/>
</dbReference>
<dbReference type="InterPro" id="IPR004160">
    <property type="entry name" value="Transl_elong_EFTu/EF1A_C"/>
</dbReference>
<dbReference type="NCBIfam" id="TIGR00485">
    <property type="entry name" value="EF-Tu"/>
    <property type="match status" value="1"/>
</dbReference>
<dbReference type="NCBIfam" id="NF000766">
    <property type="entry name" value="PRK00049.1"/>
    <property type="match status" value="1"/>
</dbReference>
<dbReference type="NCBIfam" id="NF009372">
    <property type="entry name" value="PRK12735.1"/>
    <property type="match status" value="1"/>
</dbReference>
<dbReference type="NCBIfam" id="NF009373">
    <property type="entry name" value="PRK12736.1"/>
    <property type="match status" value="1"/>
</dbReference>
<dbReference type="NCBIfam" id="TIGR00231">
    <property type="entry name" value="small_GTP"/>
    <property type="match status" value="1"/>
</dbReference>
<dbReference type="PANTHER" id="PTHR43721:SF22">
    <property type="entry name" value="ELONGATION FACTOR TU, MITOCHONDRIAL"/>
    <property type="match status" value="1"/>
</dbReference>
<dbReference type="PANTHER" id="PTHR43721">
    <property type="entry name" value="ELONGATION FACTOR TU-RELATED"/>
    <property type="match status" value="1"/>
</dbReference>
<dbReference type="Pfam" id="PF00009">
    <property type="entry name" value="GTP_EFTU"/>
    <property type="match status" value="1"/>
</dbReference>
<dbReference type="Pfam" id="PF03144">
    <property type="entry name" value="GTP_EFTU_D2"/>
    <property type="match status" value="1"/>
</dbReference>
<dbReference type="Pfam" id="PF03143">
    <property type="entry name" value="GTP_EFTU_D3"/>
    <property type="match status" value="1"/>
</dbReference>
<dbReference type="PRINTS" id="PR00315">
    <property type="entry name" value="ELONGATNFCT"/>
</dbReference>
<dbReference type="SUPFAM" id="SSF50465">
    <property type="entry name" value="EF-Tu/eEF-1alpha/eIF2-gamma C-terminal domain"/>
    <property type="match status" value="1"/>
</dbReference>
<dbReference type="SUPFAM" id="SSF52540">
    <property type="entry name" value="P-loop containing nucleoside triphosphate hydrolases"/>
    <property type="match status" value="1"/>
</dbReference>
<dbReference type="SUPFAM" id="SSF50447">
    <property type="entry name" value="Translation proteins"/>
    <property type="match status" value="1"/>
</dbReference>
<dbReference type="PROSITE" id="PS00301">
    <property type="entry name" value="G_TR_1"/>
    <property type="match status" value="1"/>
</dbReference>
<dbReference type="PROSITE" id="PS51722">
    <property type="entry name" value="G_TR_2"/>
    <property type="match status" value="1"/>
</dbReference>
<gene>
    <name evidence="2" type="primary">tuf2</name>
    <name type="ordered locus">YPN_3864</name>
    <name type="ORF">YP516_4389</name>
</gene>
<keyword id="KW-0963">Cytoplasm</keyword>
<keyword id="KW-0251">Elongation factor</keyword>
<keyword id="KW-0342">GTP-binding</keyword>
<keyword id="KW-0378">Hydrolase</keyword>
<keyword id="KW-0460">Magnesium</keyword>
<keyword id="KW-0479">Metal-binding</keyword>
<keyword id="KW-0547">Nucleotide-binding</keyword>
<keyword id="KW-0648">Protein biosynthesis</keyword>